<reference key="1">
    <citation type="submission" date="2009-01" db="EMBL/GenBank/DDBJ databases">
        <title>Complete sequence of Anaeromyxobacter dehalogenans 2CP-1.</title>
        <authorList>
            <person name="Lucas S."/>
            <person name="Copeland A."/>
            <person name="Lapidus A."/>
            <person name="Glavina del Rio T."/>
            <person name="Dalin E."/>
            <person name="Tice H."/>
            <person name="Bruce D."/>
            <person name="Goodwin L."/>
            <person name="Pitluck S."/>
            <person name="Saunders E."/>
            <person name="Brettin T."/>
            <person name="Detter J.C."/>
            <person name="Han C."/>
            <person name="Larimer F."/>
            <person name="Land M."/>
            <person name="Hauser L."/>
            <person name="Kyrpides N."/>
            <person name="Ovchinnikova G."/>
            <person name="Beliaev A.S."/>
            <person name="Richardson P."/>
        </authorList>
    </citation>
    <scope>NUCLEOTIDE SEQUENCE [LARGE SCALE GENOMIC DNA]</scope>
    <source>
        <strain>2CP-1 / ATCC BAA-258</strain>
    </source>
</reference>
<organism>
    <name type="scientific">Anaeromyxobacter dehalogenans (strain 2CP-1 / ATCC BAA-258)</name>
    <dbReference type="NCBI Taxonomy" id="455488"/>
    <lineage>
        <taxon>Bacteria</taxon>
        <taxon>Pseudomonadati</taxon>
        <taxon>Myxococcota</taxon>
        <taxon>Myxococcia</taxon>
        <taxon>Myxococcales</taxon>
        <taxon>Cystobacterineae</taxon>
        <taxon>Anaeromyxobacteraceae</taxon>
        <taxon>Anaeromyxobacter</taxon>
    </lineage>
</organism>
<protein>
    <recommendedName>
        <fullName evidence="1">ATP phosphoribosyltransferase regulatory subunit</fullName>
    </recommendedName>
</protein>
<feature type="chain" id="PRO_1000122659" description="ATP phosphoribosyltransferase regulatory subunit">
    <location>
        <begin position="1"/>
        <end position="349"/>
    </location>
</feature>
<feature type="region of interest" description="Disordered" evidence="2">
    <location>
        <begin position="327"/>
        <end position="349"/>
    </location>
</feature>
<feature type="compositionally biased region" description="Basic residues" evidence="2">
    <location>
        <begin position="330"/>
        <end position="349"/>
    </location>
</feature>
<name>HISZ_ANAD2</name>
<comment type="function">
    <text evidence="1">Required for the first step of histidine biosynthesis. May allow the feedback regulation of ATP phosphoribosyltransferase activity by histidine.</text>
</comment>
<comment type="pathway">
    <text evidence="1">Amino-acid biosynthesis; L-histidine biosynthesis; L-histidine from 5-phospho-alpha-D-ribose 1-diphosphate: step 1/9.</text>
</comment>
<comment type="subunit">
    <text evidence="1">Heteromultimer composed of HisG and HisZ subunits.</text>
</comment>
<comment type="subcellular location">
    <subcellularLocation>
        <location evidence="1">Cytoplasm</location>
    </subcellularLocation>
</comment>
<comment type="miscellaneous">
    <text>This function is generally fulfilled by the C-terminal part of HisG, which is missing in some bacteria such as this one.</text>
</comment>
<comment type="similarity">
    <text evidence="1">Belongs to the class-II aminoacyl-tRNA synthetase family. HisZ subfamily.</text>
</comment>
<evidence type="ECO:0000255" key="1">
    <source>
        <dbReference type="HAMAP-Rule" id="MF_00125"/>
    </source>
</evidence>
<evidence type="ECO:0000256" key="2">
    <source>
        <dbReference type="SAM" id="MobiDB-lite"/>
    </source>
</evidence>
<gene>
    <name evidence="1" type="primary">hisZ</name>
    <name type="ordered locus">A2cp1_2692</name>
</gene>
<proteinExistence type="inferred from homology"/>
<keyword id="KW-0028">Amino-acid biosynthesis</keyword>
<keyword id="KW-0963">Cytoplasm</keyword>
<keyword id="KW-0368">Histidine biosynthesis</keyword>
<accession>B8JDI0</accession>
<dbReference type="EMBL" id="CP001359">
    <property type="protein sequence ID" value="ACL66029.1"/>
    <property type="molecule type" value="Genomic_DNA"/>
</dbReference>
<dbReference type="RefSeq" id="WP_012633799.1">
    <property type="nucleotide sequence ID" value="NC_011891.1"/>
</dbReference>
<dbReference type="SMR" id="B8JDI0"/>
<dbReference type="KEGG" id="acp:A2cp1_2692"/>
<dbReference type="HOGENOM" id="CLU_025113_0_3_7"/>
<dbReference type="UniPathway" id="UPA00031">
    <property type="reaction ID" value="UER00006"/>
</dbReference>
<dbReference type="Proteomes" id="UP000007089">
    <property type="component" value="Chromosome"/>
</dbReference>
<dbReference type="GO" id="GO:0005737">
    <property type="term" value="C:cytoplasm"/>
    <property type="evidence" value="ECO:0007669"/>
    <property type="project" value="UniProtKB-SubCell"/>
</dbReference>
<dbReference type="GO" id="GO:0004821">
    <property type="term" value="F:histidine-tRNA ligase activity"/>
    <property type="evidence" value="ECO:0007669"/>
    <property type="project" value="TreeGrafter"/>
</dbReference>
<dbReference type="GO" id="GO:0006427">
    <property type="term" value="P:histidyl-tRNA aminoacylation"/>
    <property type="evidence" value="ECO:0007669"/>
    <property type="project" value="TreeGrafter"/>
</dbReference>
<dbReference type="GO" id="GO:0000105">
    <property type="term" value="P:L-histidine biosynthetic process"/>
    <property type="evidence" value="ECO:0007669"/>
    <property type="project" value="UniProtKB-UniRule"/>
</dbReference>
<dbReference type="CDD" id="cd00773">
    <property type="entry name" value="HisRS-like_core"/>
    <property type="match status" value="1"/>
</dbReference>
<dbReference type="Gene3D" id="3.30.930.10">
    <property type="entry name" value="Bira Bifunctional Protein, Domain 2"/>
    <property type="match status" value="1"/>
</dbReference>
<dbReference type="HAMAP" id="MF_00125">
    <property type="entry name" value="HisZ"/>
    <property type="match status" value="1"/>
</dbReference>
<dbReference type="InterPro" id="IPR006195">
    <property type="entry name" value="aa-tRNA-synth_II"/>
</dbReference>
<dbReference type="InterPro" id="IPR045864">
    <property type="entry name" value="aa-tRNA-synth_II/BPL/LPL"/>
</dbReference>
<dbReference type="InterPro" id="IPR041715">
    <property type="entry name" value="HisRS-like_core"/>
</dbReference>
<dbReference type="InterPro" id="IPR004516">
    <property type="entry name" value="HisRS/HisZ"/>
</dbReference>
<dbReference type="InterPro" id="IPR004517">
    <property type="entry name" value="HisZ"/>
</dbReference>
<dbReference type="NCBIfam" id="TIGR00443">
    <property type="entry name" value="hisZ_biosyn_reg"/>
    <property type="match status" value="1"/>
</dbReference>
<dbReference type="PANTHER" id="PTHR43707:SF1">
    <property type="entry name" value="HISTIDINE--TRNA LIGASE, MITOCHONDRIAL-RELATED"/>
    <property type="match status" value="1"/>
</dbReference>
<dbReference type="PANTHER" id="PTHR43707">
    <property type="entry name" value="HISTIDYL-TRNA SYNTHETASE"/>
    <property type="match status" value="1"/>
</dbReference>
<dbReference type="Pfam" id="PF13393">
    <property type="entry name" value="tRNA-synt_His"/>
    <property type="match status" value="1"/>
</dbReference>
<dbReference type="PIRSF" id="PIRSF001549">
    <property type="entry name" value="His-tRNA_synth"/>
    <property type="match status" value="1"/>
</dbReference>
<dbReference type="SUPFAM" id="SSF55681">
    <property type="entry name" value="Class II aaRS and biotin synthetases"/>
    <property type="match status" value="1"/>
</dbReference>
<dbReference type="PROSITE" id="PS50862">
    <property type="entry name" value="AA_TRNA_LIGASE_II"/>
    <property type="match status" value="1"/>
</dbReference>
<sequence>MLDLSLPSGLRDLLPDHSAHLAELSSKLHDVFSRFGYRRVFLPTLERLDVVERGLSPAALADVMKFVEPGSGEVVAIRPDITPQIARLYAARPDALPSPARLCYDGPVLRAREARAGRPREVYQAGVELLGAGGASADAEALVLLARSLERVGLKAPRVEVGHARFAEAVMEAARLPERLRSAAWEALSRKDRAALAAAAAKGRGSAEAREAVPQLAGLFGDGALDRARAIARAVPEAAASLAETEAALRIARRRGVREVAVDLGEARGLGYYTGITFAGYAPGAGAAVARGGRYDGLLARFGRPGPAIGFAVDLEFATQALERVNGRGRGVRPRRASARGGRARARPR</sequence>